<comment type="function">
    <text evidence="1">Methylates large ribosomal subunit protein uL3 on a specific glutamine residue.</text>
</comment>
<comment type="catalytic activity">
    <reaction evidence="1">
        <text>L-glutaminyl-[ribosomal protein uL3] + S-adenosyl-L-methionine = N(5)-methyl-L-glutaminyl-[ribosomal protein uL3] + S-adenosyl-L-homocysteine + H(+)</text>
        <dbReference type="Rhea" id="RHEA:45020"/>
        <dbReference type="Rhea" id="RHEA-COMP:11063"/>
        <dbReference type="Rhea" id="RHEA-COMP:11064"/>
        <dbReference type="ChEBI" id="CHEBI:15378"/>
        <dbReference type="ChEBI" id="CHEBI:30011"/>
        <dbReference type="ChEBI" id="CHEBI:57856"/>
        <dbReference type="ChEBI" id="CHEBI:59789"/>
        <dbReference type="ChEBI" id="CHEBI:61891"/>
        <dbReference type="EC" id="2.1.1.298"/>
    </reaction>
</comment>
<comment type="similarity">
    <text evidence="1">Belongs to the protein N5-glutamine methyltransferase family. PrmB subfamily.</text>
</comment>
<comment type="sequence caution" evidence="2">
    <conflict type="erroneous initiation">
        <sequence resource="EMBL-CDS" id="AAK02474"/>
    </conflict>
    <text>Extended N-terminus.</text>
</comment>
<keyword id="KW-0489">Methyltransferase</keyword>
<keyword id="KW-1185">Reference proteome</keyword>
<keyword id="KW-0949">S-adenosyl-L-methionine</keyword>
<keyword id="KW-0808">Transferase</keyword>
<accession>Q9CNN7</accession>
<protein>
    <recommendedName>
        <fullName evidence="1">Ribosomal protein uL3 glutamine methyltransferase</fullName>
        <shortName evidence="1">uL3 MTase</shortName>
        <ecNumber evidence="1">2.1.1.298</ecNumber>
    </recommendedName>
    <alternativeName>
        <fullName evidence="1">N5-glutamine methyltransferase PrmB</fullName>
    </alternativeName>
</protein>
<reference key="1">
    <citation type="journal article" date="2001" name="Proc. Natl. Acad. Sci. U.S.A.">
        <title>Complete genomic sequence of Pasteurella multocida Pm70.</title>
        <authorList>
            <person name="May B.J."/>
            <person name="Zhang Q."/>
            <person name="Li L.L."/>
            <person name="Paustian M.L."/>
            <person name="Whittam T.S."/>
            <person name="Kapur V."/>
        </authorList>
    </citation>
    <scope>NUCLEOTIDE SEQUENCE [LARGE SCALE GENOMIC DNA]</scope>
    <source>
        <strain>Pm70</strain>
    </source>
</reference>
<gene>
    <name evidence="1" type="primary">prmB</name>
    <name type="ordered locus">PM0390</name>
</gene>
<evidence type="ECO:0000255" key="1">
    <source>
        <dbReference type="HAMAP-Rule" id="MF_02125"/>
    </source>
</evidence>
<evidence type="ECO:0000305" key="2"/>
<organism>
    <name type="scientific">Pasteurella multocida (strain Pm70)</name>
    <dbReference type="NCBI Taxonomy" id="272843"/>
    <lineage>
        <taxon>Bacteria</taxon>
        <taxon>Pseudomonadati</taxon>
        <taxon>Pseudomonadota</taxon>
        <taxon>Gammaproteobacteria</taxon>
        <taxon>Pasteurellales</taxon>
        <taxon>Pasteurellaceae</taxon>
        <taxon>Pasteurella</taxon>
    </lineage>
</organism>
<feature type="chain" id="PRO_0000088009" description="Ribosomal protein uL3 glutamine methyltransferase">
    <location>
        <begin position="1"/>
        <end position="313"/>
    </location>
</feature>
<name>PRMB_PASMU</name>
<sequence length="313" mass="35735">MTHNQELIETIIADQVHQELHSIQDFLRWTYSTFNRSDIYYGHGYNNAWDEALQLILTTLALPIDFPNEYYAAHLTRSEKEVLLRLIIQRLEKRIPVAYLTHQAWFCGLNFYVDERVIVPRSPISALIQEGFAPLLPQEPKRILDMCTGSGCIAIACAERFPEAEVDAVDLSSDALDVAQINIERHNMLDRVYPIQSDLFHDLAKDQYDLIVANPPYVDLEDLSDMPAEFHHEPEMALGSGVDGLEITKKILYAAPDYLTEQGVLVCEVGNSMVHLIEQYPDVPFNWVELKNGGVGVFALTQAELMQYRHLFQ</sequence>
<proteinExistence type="inferred from homology"/>
<dbReference type="EC" id="2.1.1.298" evidence="1"/>
<dbReference type="EMBL" id="AE004439">
    <property type="protein sequence ID" value="AAK02474.1"/>
    <property type="status" value="ALT_INIT"/>
    <property type="molecule type" value="Genomic_DNA"/>
</dbReference>
<dbReference type="RefSeq" id="WP_005753769.1">
    <property type="nucleotide sequence ID" value="NC_002663.1"/>
</dbReference>
<dbReference type="SMR" id="Q9CNN7"/>
<dbReference type="STRING" id="272843.PM0390"/>
<dbReference type="EnsemblBacteria" id="AAK02474">
    <property type="protein sequence ID" value="AAK02474"/>
    <property type="gene ID" value="PM0390"/>
</dbReference>
<dbReference type="GeneID" id="77206123"/>
<dbReference type="KEGG" id="pmu:PM0390"/>
<dbReference type="PATRIC" id="fig|272843.6.peg.403"/>
<dbReference type="HOGENOM" id="CLU_018398_5_1_6"/>
<dbReference type="OrthoDB" id="9800643at2"/>
<dbReference type="Proteomes" id="UP000000809">
    <property type="component" value="Chromosome"/>
</dbReference>
<dbReference type="GO" id="GO:0005829">
    <property type="term" value="C:cytosol"/>
    <property type="evidence" value="ECO:0007669"/>
    <property type="project" value="TreeGrafter"/>
</dbReference>
<dbReference type="GO" id="GO:0003676">
    <property type="term" value="F:nucleic acid binding"/>
    <property type="evidence" value="ECO:0007669"/>
    <property type="project" value="InterPro"/>
</dbReference>
<dbReference type="GO" id="GO:0036009">
    <property type="term" value="F:protein-glutamine N-methyltransferase activity"/>
    <property type="evidence" value="ECO:0007669"/>
    <property type="project" value="UniProtKB-UniRule"/>
</dbReference>
<dbReference type="GO" id="GO:0032259">
    <property type="term" value="P:methylation"/>
    <property type="evidence" value="ECO:0007669"/>
    <property type="project" value="UniProtKB-KW"/>
</dbReference>
<dbReference type="CDD" id="cd02440">
    <property type="entry name" value="AdoMet_MTases"/>
    <property type="match status" value="1"/>
</dbReference>
<dbReference type="FunFam" id="3.40.50.150:FF:000042">
    <property type="entry name" value="50S ribosomal protein L3 glutamine methyltransferase"/>
    <property type="match status" value="1"/>
</dbReference>
<dbReference type="Gene3D" id="1.10.8.10">
    <property type="entry name" value="DNA helicase RuvA subunit, C-terminal domain"/>
    <property type="match status" value="1"/>
</dbReference>
<dbReference type="Gene3D" id="3.40.50.150">
    <property type="entry name" value="Vaccinia Virus protein VP39"/>
    <property type="match status" value="1"/>
</dbReference>
<dbReference type="HAMAP" id="MF_02125">
    <property type="entry name" value="L3_methyltr_PrmB"/>
    <property type="match status" value="1"/>
</dbReference>
<dbReference type="InterPro" id="IPR002052">
    <property type="entry name" value="DNA_methylase_N6_adenine_CS"/>
</dbReference>
<dbReference type="InterPro" id="IPR004556">
    <property type="entry name" value="HemK-like"/>
</dbReference>
<dbReference type="InterPro" id="IPR017127">
    <property type="entry name" value="Ribosome_uL3_MTase"/>
</dbReference>
<dbReference type="InterPro" id="IPR029063">
    <property type="entry name" value="SAM-dependent_MTases_sf"/>
</dbReference>
<dbReference type="InterPro" id="IPR007848">
    <property type="entry name" value="Small_mtfrase_dom"/>
</dbReference>
<dbReference type="NCBIfam" id="TIGR00536">
    <property type="entry name" value="hemK_fam"/>
    <property type="match status" value="1"/>
</dbReference>
<dbReference type="NCBIfam" id="TIGR03533">
    <property type="entry name" value="L3_gln_methyl"/>
    <property type="match status" value="1"/>
</dbReference>
<dbReference type="PANTHER" id="PTHR47806">
    <property type="entry name" value="50S RIBOSOMAL PROTEIN L3 GLUTAMINE METHYLTRANSFERASE"/>
    <property type="match status" value="1"/>
</dbReference>
<dbReference type="PANTHER" id="PTHR47806:SF1">
    <property type="entry name" value="RIBOSOMAL PROTEIN UL3 GLUTAMINE METHYLTRANSFERASE"/>
    <property type="match status" value="1"/>
</dbReference>
<dbReference type="Pfam" id="PF05175">
    <property type="entry name" value="MTS"/>
    <property type="match status" value="1"/>
</dbReference>
<dbReference type="PIRSF" id="PIRSF037167">
    <property type="entry name" value="Mtase_YfcB_prd"/>
    <property type="match status" value="1"/>
</dbReference>
<dbReference type="SUPFAM" id="SSF53335">
    <property type="entry name" value="S-adenosyl-L-methionine-dependent methyltransferases"/>
    <property type="match status" value="1"/>
</dbReference>